<feature type="chain" id="PRO_0000107215" description="Uncharacterized protein MJ1211">
    <location>
        <begin position="1"/>
        <end position="116"/>
    </location>
</feature>
<accession>Q58608</accession>
<organism>
    <name type="scientific">Methanocaldococcus jannaschii (strain ATCC 43067 / DSM 2661 / JAL-1 / JCM 10045 / NBRC 100440)</name>
    <name type="common">Methanococcus jannaschii</name>
    <dbReference type="NCBI Taxonomy" id="243232"/>
    <lineage>
        <taxon>Archaea</taxon>
        <taxon>Methanobacteriati</taxon>
        <taxon>Methanobacteriota</taxon>
        <taxon>Methanomada group</taxon>
        <taxon>Methanococci</taxon>
        <taxon>Methanococcales</taxon>
        <taxon>Methanocaldococcaceae</taxon>
        <taxon>Methanocaldococcus</taxon>
    </lineage>
</organism>
<protein>
    <recommendedName>
        <fullName>Uncharacterized protein MJ1211</fullName>
    </recommendedName>
</protein>
<name>Y1211_METJA</name>
<dbReference type="EMBL" id="L77117">
    <property type="protein sequence ID" value="AAB99222.1"/>
    <property type="molecule type" value="Genomic_DNA"/>
</dbReference>
<dbReference type="PIR" id="B64451">
    <property type="entry name" value="B64451"/>
</dbReference>
<dbReference type="SMR" id="Q58608"/>
<dbReference type="STRING" id="243232.MJ_1211"/>
<dbReference type="PaxDb" id="243232-MJ_1211"/>
<dbReference type="EnsemblBacteria" id="AAB99222">
    <property type="protein sequence ID" value="AAB99222"/>
    <property type="gene ID" value="MJ_1211"/>
</dbReference>
<dbReference type="KEGG" id="mja:MJ_1211"/>
<dbReference type="eggNOG" id="arCOG01182">
    <property type="taxonomic scope" value="Archaea"/>
</dbReference>
<dbReference type="HOGENOM" id="CLU_2091298_0_0_2"/>
<dbReference type="InParanoid" id="Q58608"/>
<dbReference type="PhylomeDB" id="Q58608"/>
<dbReference type="Proteomes" id="UP000000805">
    <property type="component" value="Chromosome"/>
</dbReference>
<reference key="1">
    <citation type="journal article" date="1996" name="Science">
        <title>Complete genome sequence of the methanogenic archaeon, Methanococcus jannaschii.</title>
        <authorList>
            <person name="Bult C.J."/>
            <person name="White O."/>
            <person name="Olsen G.J."/>
            <person name="Zhou L."/>
            <person name="Fleischmann R.D."/>
            <person name="Sutton G.G."/>
            <person name="Blake J.A."/>
            <person name="FitzGerald L.M."/>
            <person name="Clayton R.A."/>
            <person name="Gocayne J.D."/>
            <person name="Kerlavage A.R."/>
            <person name="Dougherty B.A."/>
            <person name="Tomb J.-F."/>
            <person name="Adams M.D."/>
            <person name="Reich C.I."/>
            <person name="Overbeek R."/>
            <person name="Kirkness E.F."/>
            <person name="Weinstock K.G."/>
            <person name="Merrick J.M."/>
            <person name="Glodek A."/>
            <person name="Scott J.L."/>
            <person name="Geoghagen N.S.M."/>
            <person name="Weidman J.F."/>
            <person name="Fuhrmann J.L."/>
            <person name="Nguyen D."/>
            <person name="Utterback T.R."/>
            <person name="Kelley J.M."/>
            <person name="Peterson J.D."/>
            <person name="Sadow P.W."/>
            <person name="Hanna M.C."/>
            <person name="Cotton M.D."/>
            <person name="Roberts K.M."/>
            <person name="Hurst M.A."/>
            <person name="Kaine B.P."/>
            <person name="Borodovsky M."/>
            <person name="Klenk H.-P."/>
            <person name="Fraser C.M."/>
            <person name="Smith H.O."/>
            <person name="Woese C.R."/>
            <person name="Venter J.C."/>
        </authorList>
    </citation>
    <scope>NUCLEOTIDE SEQUENCE [LARGE SCALE GENOMIC DNA]</scope>
    <source>
        <strain>ATCC 43067 / DSM 2661 / JAL-1 / JCM 10045 / NBRC 100440</strain>
    </source>
</reference>
<gene>
    <name type="ordered locus">MJ1211</name>
</gene>
<sequence>MEFIDGEELKSAVDKLDKDRLLKVVEDILKITLKLDILGIEHKEIQGGRHFLITNKKTYIIDFDKAKEKKTTKNFTGAIALLFGEGRIAKTIRENLNIGIDEIKFIREFAKKYKKL</sequence>
<keyword id="KW-1185">Reference proteome</keyword>
<proteinExistence type="predicted"/>